<evidence type="ECO:0000250" key="1">
    <source>
        <dbReference type="UniProtKB" id="P10358"/>
    </source>
</evidence>
<evidence type="ECO:0000255" key="2">
    <source>
        <dbReference type="PROSITE-ProRule" id="PRU00539"/>
    </source>
</evidence>
<evidence type="ECO:0000255" key="3">
    <source>
        <dbReference type="PROSITE-ProRule" id="PRU00990"/>
    </source>
</evidence>
<evidence type="ECO:0000255" key="4">
    <source>
        <dbReference type="PROSITE-ProRule" id="PRU01074"/>
    </source>
</evidence>
<evidence type="ECO:0000255" key="5">
    <source>
        <dbReference type="PROSITE-ProRule" id="PRU01079"/>
    </source>
</evidence>
<evidence type="ECO:0000256" key="6">
    <source>
        <dbReference type="SAM" id="MobiDB-lite"/>
    </source>
</evidence>
<evidence type="ECO:0000305" key="7"/>
<organismHost>
    <name type="scientific">Brassica</name>
    <dbReference type="NCBI Taxonomy" id="3705"/>
</organismHost>
<organismHost>
    <name type="scientific">Cardamine lilacina</name>
    <dbReference type="NCBI Taxonomy" id="82359"/>
</organismHost>
<sequence length="1844" mass="206613">MAFQLALDALAPTTHRDPSLHPILESTVDSIRSSIQTYPWSIPKELLPLLNSYGIPTSGLGTSHHPHAAHKTIETFLLCTHWSFQATTPSSVMFMKPSKFNKLAQVNSNFRELKNYRLHPNDSTRYPFTSPDLPVFPTIFMHDALMYYHPSQIMDLFLRKPNLERLYASLVVPPEAHLSDQSFYPKLYTYTTTRHTLHYVPEGHEAGSYNQPSDAHSWLRINSIRLGNHHLSVTILESWGPVHSLLIQRGTPPPDPSLQAPPTLMASDLFRSYQEPRLDVVSFRIPDAIELPQATFLQQPLRDRLVPRAVYNALFTYTRAVRTLRTSDPAAFVRMHSSKPDHDWVTSNAWDNLQTFALLNVPLRPNVVYHVLQSPIASLSLYLRQHWRRLTATAVPILSFLTLLQRFLPLPIPLAEVKSITAFRRELYRKKEPHHPLDVFHLQHRIRNYHSAISAVRPASPPHQKLPHALQKAALLLLRPISPLLTATPFFRSEQKSMLPNAELSWTLKRFALPWQASLVLLALSESSILLHKLFSPPTLQAQHDTYHRHLHPGSYSLQWERTPLSIPRTTAFLPFTPTTSTAPPDRSEASLPPAFASTFVPRPPPAASSPGAQPPTTTAAPPTPIEPTQRAHQNSDLALESSTSTEPPPPPIRSPDMTPSAPVLFPEINSPRRFPPQLPATPDLEPAHTPPPLSIPHQDPTDSVDPLMGSHLLHHSLPAPPTHPLPSSQLLPAPLTNDPTAIGPVLPFEELHPRRYPENTATFLTRLRSLPSNHLPQPTLNCLLSAVSDQTKVSEEHLWESLQTILPDSQLSNEETNTLGLSTEHLTALAHLYNFQATVYSDRGPILFGPSDTIKRIDITHTTGPPSHFSPGKRLLGSQPSAKGHPSDPLIRAMKSFKVSGNYLPFSEAHNHPTSISHAKNLISNMKNGFDGVLSLLDVSTGQRTGPTPKERIIQIDHYLDTNPGKTTPVVHFAGFAGCGKTYPIQQLLKTKLFKDFRVSCPTTELRTEWKTAMELHGSQSWRFNTWESSILKSSRILVIDEIYKMPRGYLDLSILADPALELVIILGDPLQGEYHSQSKDSSNHRLPSETLRLLPYIDMYCWWSYRIPQCIARLFQIHSFNAWQGVIGSVSTPHDQSPVLTNSHASSLTFNSLGYRSCTISSSQGLTFCDPAIIVLDNYTKWLSSANGLVALTRSRSGVQFMGPSSYVGGTNGSSAMFSDAFNNSLIIMDRYFPSLFPQLKLITSPLTTRGPKLNGATPSASPTHRSPNFHLPPHIPLSYDRDFVTVNSTLPDQGPETRLDTHFLPPSRLPLHFDLPPAITPPPVSTSVDPPQAKASPVYPGEFFDSLAAFFLPAHDPSTREILHKDQSSNQFPWFDRPFSLSCQPSSLISAKHAPNHDPTLLPASINKRLRFRPSDSPHQITADDVVLGLQLFHSLCRAYSRQPNSTVPFNPELFAECISLNEYAQLSSKTQSTIVANASRSDPDWRHTTVKIFAKAQHKVNDGSIFGSWKACQTLALMHDYVILVLGPVKKYQRIFDNADRPPNIYSHCGKTPNQLRDWCQEHLTHSTPKIANDYTAFDQSQHGESVVLEALKMKRLNIPSHLIQLHVHLKTNVSTQFGPLTCMRLTGEPGTYDDNTDYNLAVIYSQYDVGSCPIMVSGDDSLIDHPLPTRHDWPSVLKRLHLRFKLELTSHPLFCGYYVGPAGCIRNPLALFCKLMIAVDDDALDDRRLSYLTEFTTGHLLGESLWHLLPETHVQYQSACFDFFCRRCPRHEKMLLDDSTPALSLLERITSSPRWLTKNAMYLLPAKLRLAITSLSQTQSFPESIEVSHAESELLHYVQ</sequence>
<keyword id="KW-0067">ATP-binding</keyword>
<keyword id="KW-0945">Host-virus interaction</keyword>
<keyword id="KW-0378">Hydrolase</keyword>
<keyword id="KW-0489">Methyltransferase</keyword>
<keyword id="KW-1127">Modulation of host ubiquitin pathway by viral deubiquitinase</keyword>
<keyword id="KW-1130">Modulation of host ubiquitin pathway by virus</keyword>
<keyword id="KW-0511">Multifunctional enzyme</keyword>
<keyword id="KW-0547">Nucleotide-binding</keyword>
<keyword id="KW-0548">Nucleotidyltransferase</keyword>
<keyword id="KW-0645">Protease</keyword>
<keyword id="KW-0696">RNA-directed RNA polymerase</keyword>
<keyword id="KW-0788">Thiol protease</keyword>
<keyword id="KW-0808">Transferase</keyword>
<keyword id="KW-0693">Viral RNA replication</keyword>
<protein>
    <recommendedName>
        <fullName evidence="7">Non-structural replication polyprotein</fullName>
    </recommendedName>
    <alternativeName>
        <fullName>206 kDa polyprotein</fullName>
    </alternativeName>
    <alternativeName>
        <fullName>206K</fullName>
    </alternativeName>
    <component>
        <recommendedName>
            <fullName>Methyltransferase/Protease/Ubiquitinyl hydrolase</fullName>
            <ecNumber>2.1.1.-</ecNumber>
            <ecNumber evidence="1">3.4.19.12</ecNumber>
            <ecNumber>3.4.22.-</ecNumber>
        </recommendedName>
        <alternativeName>
            <fullName>98 kDa protein</fullName>
        </alternativeName>
        <alternativeName>
            <fullName>MET/PRO</fullName>
        </alternativeName>
    </component>
    <component>
        <recommendedName>
            <fullName>Putative helicase</fullName>
            <ecNumber>3.6.4.-</ecNumber>
        </recommendedName>
        <alternativeName>
            <fullName>42 kDa protein</fullName>
        </alternativeName>
        <alternativeName>
            <fullName>HEL</fullName>
        </alternativeName>
    </component>
    <component>
        <recommendedName>
            <fullName>RNA-directed RNA polymerase</fullName>
            <ecNumber>2.7.7.48</ecNumber>
        </recommendedName>
        <alternativeName>
            <fullName>66 kDa protein</fullName>
        </alternativeName>
        <alternativeName>
            <fullName>POL</fullName>
        </alternativeName>
    </component>
</protein>
<reference key="1">
    <citation type="journal article" date="1992" name="Plant Mol. Biol.">
        <title>Genomic RNA sequence of turnip yellow mosaic virus isolate TYMC, a cDNA-based clone with verified infectivity.</title>
        <authorList>
            <person name="Dreher T.W."/>
            <person name="Bransom K.L."/>
        </authorList>
    </citation>
    <scope>NUCLEOTIDE SEQUENCE [GENOMIC RNA]</scope>
</reference>
<name>POLN_TYMVC</name>
<accession>P28477</accession>
<organism>
    <name type="scientific">Turnip yellow mosaic virus (isolate TYMC)</name>
    <dbReference type="NCBI Taxonomy" id="31751"/>
    <lineage>
        <taxon>Viruses</taxon>
        <taxon>Riboviria</taxon>
        <taxon>Orthornavirae</taxon>
        <taxon>Kitrinoviricota</taxon>
        <taxon>Alsuviricetes</taxon>
        <taxon>Tymovirales</taxon>
        <taxon>Tymoviridae</taxon>
        <taxon>Tymovirus</taxon>
        <taxon>Tymovirus brassicae</taxon>
    </lineage>
</organism>
<comment type="function">
    <molecule>Methyltransferase/Protease/Ubiquitinyl hydrolase</molecule>
    <text evidence="1">Acts as a cysteine protease, methyltransferase and deubiquitinase. The cysteine protease activity cleaves the polyprotein giving rise to mature proteins. The protease has the ability to process substrates in trans. The methyltransferase domain is probably involved in viral RNA capping. The deubiquitylating activity counteracts the degradation of the viral polymerase mediated by the host ubiquitin-proteasome system. The polymerase is thus stabilized and infectivity is increased. Favors K63 poly-Ub linkage.</text>
</comment>
<comment type="function">
    <molecule>RNA-directed RNA polymerase</molecule>
    <text evidence="1">RNA-directed RNA polymerase is responsible for the replication and transcription of the genome.</text>
</comment>
<comment type="catalytic activity">
    <molecule>Methyltransferase/Protease/Ubiquitinyl hydrolase</molecule>
    <reaction evidence="1">
        <text>Thiol-dependent hydrolysis of ester, thioester, amide, peptide and isopeptide bonds formed by the C-terminal Gly of ubiquitin (a 76-residue protein attached to proteins as an intracellular targeting signal).</text>
        <dbReference type="EC" id="3.4.19.12"/>
    </reaction>
</comment>
<comment type="catalytic activity">
    <molecule>RNA-directed RNA polymerase</molecule>
    <reaction evidence="2">
        <text>RNA(n) + a ribonucleoside 5'-triphosphate = RNA(n+1) + diphosphate</text>
        <dbReference type="Rhea" id="RHEA:21248"/>
        <dbReference type="Rhea" id="RHEA-COMP:14527"/>
        <dbReference type="Rhea" id="RHEA-COMP:17342"/>
        <dbReference type="ChEBI" id="CHEBI:33019"/>
        <dbReference type="ChEBI" id="CHEBI:61557"/>
        <dbReference type="ChEBI" id="CHEBI:140395"/>
        <dbReference type="EC" id="2.7.7.48"/>
    </reaction>
</comment>
<comment type="subunit">
    <molecule>Methyltransferase/Protease/Ubiquitinyl hydrolase</molecule>
    <text evidence="1">Interacts with host ubiquitin.</text>
</comment>
<comment type="subcellular location">
    <molecule>Methyltransferase/Protease/Ubiquitinyl hydrolase</molecule>
    <subcellularLocation>
        <location evidence="1">Host chloroplast envelope</location>
    </subcellularLocation>
</comment>
<comment type="subcellular location">
    <molecule>Putative helicase</molecule>
    <subcellularLocation>
        <location evidence="1">Host chloroplast envelope</location>
    </subcellularLocation>
</comment>
<comment type="subcellular location">
    <molecule>RNA-directed RNA polymerase</molecule>
    <subcellularLocation>
        <location evidence="1">Host chloroplast envelope</location>
    </subcellularLocation>
</comment>
<comment type="domain">
    <molecule>Methyltransferase/Protease/Ubiquitinyl hydrolase</molecule>
    <text evidence="1">The viral OTU domain (vOTU) is responsible for the deubiquitination activity. Both protease (PRO) and deubiquitination (DUB) activities rely on the single catalytic site of the cysteine proteinase. The switch in the PRO/DUB activities is due to the mobility of a GPP flap.</text>
</comment>
<comment type="PTM">
    <text evidence="1">Specific enzymatic cleavages by the host yield mature proteins.</text>
</comment>
<comment type="miscellaneous">
    <molecule>Methyltransferase/Protease/Ubiquitinyl hydrolase</molecule>
    <text evidence="1">The deubiquitinase activity is low compared to that of Bunyaviruses or coronaviruses.</text>
</comment>
<comment type="similarity">
    <text evidence="7">Belongs to the Tymoviridae non-structural replication polyprotein family.</text>
</comment>
<proteinExistence type="inferred from homology"/>
<feature type="chain" id="PRO_0000222940" description="Non-structural replication polyprotein">
    <location>
        <begin position="1"/>
        <end position="1844"/>
    </location>
</feature>
<feature type="chain" id="PRO_0000455972" description="Methyltransferase/Protease/Ubiquitinyl hydrolase" evidence="1">
    <location>
        <begin position="1"/>
        <end position="879"/>
    </location>
</feature>
<feature type="chain" id="PRO_0000455973" description="Putative helicase" evidence="1">
    <location>
        <begin position="880"/>
        <end position="1259"/>
    </location>
</feature>
<feature type="chain" id="PRO_0000455974" description="RNA-directed RNA polymerase" evidence="1">
    <location>
        <begin position="1260"/>
        <end position="1844"/>
    </location>
</feature>
<feature type="domain" description="Alphavirus-like MT" evidence="5">
    <location>
        <begin position="58"/>
        <end position="219"/>
    </location>
</feature>
<feature type="domain" description="OTU" evidence="1">
    <location>
        <begin position="728"/>
        <end position="879"/>
    </location>
</feature>
<feature type="domain" description="Peptidase C21" evidence="4">
    <location>
        <begin position="730"/>
        <end position="884"/>
    </location>
</feature>
<feature type="domain" description="(+)RNA virus helicase ATP-binding" evidence="3">
    <location>
        <begin position="946"/>
        <end position="1103"/>
    </location>
</feature>
<feature type="domain" description="(+)RNA virus helicase C-terminal" evidence="3">
    <location>
        <begin position="1104"/>
        <end position="1236"/>
    </location>
</feature>
<feature type="domain" description="RdRp catalytic" evidence="2">
    <location>
        <begin position="1572"/>
        <end position="1678"/>
    </location>
</feature>
<feature type="region of interest" description="Disordered" evidence="6">
    <location>
        <begin position="571"/>
        <end position="729"/>
    </location>
</feature>
<feature type="region of interest" description="Disordered" evidence="6">
    <location>
        <begin position="859"/>
        <end position="887"/>
    </location>
</feature>
<feature type="short sequence motif" description="GPP flap" evidence="1">
    <location>
        <begin position="865"/>
        <end position="867"/>
    </location>
</feature>
<feature type="compositionally biased region" description="Low complexity" evidence="6">
    <location>
        <begin position="609"/>
        <end position="621"/>
    </location>
</feature>
<feature type="active site" description="For protease activity" evidence="4">
    <location>
        <position position="783"/>
    </location>
</feature>
<feature type="active site" description="For protease activity" evidence="4">
    <location>
        <position position="869"/>
    </location>
</feature>
<feature type="binding site" evidence="3">
    <location>
        <begin position="976"/>
        <end position="983"/>
    </location>
    <ligand>
        <name>a ribonucleoside 5'-triphosphate</name>
        <dbReference type="ChEBI" id="CHEBI:61557"/>
    </ligand>
</feature>
<feature type="site" description="Cleavage; by viral protease" evidence="1">
    <location>
        <begin position="879"/>
        <end position="880"/>
    </location>
</feature>
<feature type="site" description="Cleavage; by viral protease" evidence="1">
    <location>
        <begin position="1259"/>
        <end position="1260"/>
    </location>
</feature>
<dbReference type="EC" id="2.1.1.-"/>
<dbReference type="EC" id="3.4.19.12" evidence="1"/>
<dbReference type="EC" id="3.4.22.-"/>
<dbReference type="EC" id="3.6.4.-"/>
<dbReference type="EC" id="2.7.7.48"/>
<dbReference type="EMBL" id="X16378">
    <property type="protein sequence ID" value="CAA34415.1"/>
    <property type="molecule type" value="Genomic_RNA"/>
</dbReference>
<dbReference type="PIR" id="S19151">
    <property type="entry name" value="S19151"/>
</dbReference>
<dbReference type="MEROPS" id="C21.001"/>
<dbReference type="GO" id="GO:0005524">
    <property type="term" value="F:ATP binding"/>
    <property type="evidence" value="ECO:0007669"/>
    <property type="project" value="UniProtKB-KW"/>
</dbReference>
<dbReference type="GO" id="GO:0004197">
    <property type="term" value="F:cysteine-type endopeptidase activity"/>
    <property type="evidence" value="ECO:0007669"/>
    <property type="project" value="InterPro"/>
</dbReference>
<dbReference type="GO" id="GO:0008174">
    <property type="term" value="F:mRNA methyltransferase activity"/>
    <property type="evidence" value="ECO:0007669"/>
    <property type="project" value="InterPro"/>
</dbReference>
<dbReference type="GO" id="GO:0003723">
    <property type="term" value="F:RNA binding"/>
    <property type="evidence" value="ECO:0007669"/>
    <property type="project" value="InterPro"/>
</dbReference>
<dbReference type="GO" id="GO:0003968">
    <property type="term" value="F:RNA-directed RNA polymerase activity"/>
    <property type="evidence" value="ECO:0007669"/>
    <property type="project" value="UniProtKB-KW"/>
</dbReference>
<dbReference type="GO" id="GO:0006351">
    <property type="term" value="P:DNA-templated transcription"/>
    <property type="evidence" value="ECO:0007669"/>
    <property type="project" value="InterPro"/>
</dbReference>
<dbReference type="GO" id="GO:0032259">
    <property type="term" value="P:methylation"/>
    <property type="evidence" value="ECO:0007669"/>
    <property type="project" value="UniProtKB-KW"/>
</dbReference>
<dbReference type="GO" id="GO:0016556">
    <property type="term" value="P:mRNA modification"/>
    <property type="evidence" value="ECO:0007669"/>
    <property type="project" value="InterPro"/>
</dbReference>
<dbReference type="GO" id="GO:0006508">
    <property type="term" value="P:proteolysis"/>
    <property type="evidence" value="ECO:0007669"/>
    <property type="project" value="UniProtKB-KW"/>
</dbReference>
<dbReference type="GO" id="GO:0006396">
    <property type="term" value="P:RNA processing"/>
    <property type="evidence" value="ECO:0007669"/>
    <property type="project" value="InterPro"/>
</dbReference>
<dbReference type="GO" id="GO:0039648">
    <property type="term" value="P:symbiont-mediated perturbation of host ubiquitin-like protein modification"/>
    <property type="evidence" value="ECO:0007669"/>
    <property type="project" value="UniProtKB-KW"/>
</dbReference>
<dbReference type="GO" id="GO:0039694">
    <property type="term" value="P:viral RNA genome replication"/>
    <property type="evidence" value="ECO:0007669"/>
    <property type="project" value="InterPro"/>
</dbReference>
<dbReference type="CDD" id="cd23247">
    <property type="entry name" value="Tymoviridae_RdRp"/>
    <property type="match status" value="1"/>
</dbReference>
<dbReference type="Gene3D" id="3.90.70.100">
    <property type="match status" value="1"/>
</dbReference>
<dbReference type="Gene3D" id="3.40.50.300">
    <property type="entry name" value="P-loop containing nucleotide triphosphate hydrolases"/>
    <property type="match status" value="1"/>
</dbReference>
<dbReference type="InterPro" id="IPR027351">
    <property type="entry name" value="(+)RNA_virus_helicase_core_dom"/>
</dbReference>
<dbReference type="InterPro" id="IPR002588">
    <property type="entry name" value="Alphavirus-like_MT_dom"/>
</dbReference>
<dbReference type="InterPro" id="IPR043502">
    <property type="entry name" value="DNA/RNA_pol_sf"/>
</dbReference>
<dbReference type="InterPro" id="IPR027417">
    <property type="entry name" value="P-loop_NTPase"/>
</dbReference>
<dbReference type="InterPro" id="IPR008043">
    <property type="entry name" value="Peptidase_C21"/>
</dbReference>
<dbReference type="InterPro" id="IPR001788">
    <property type="entry name" value="RNA-dep_RNA_pol_alsuvir"/>
</dbReference>
<dbReference type="InterPro" id="IPR007094">
    <property type="entry name" value="RNA-dir_pol_PSvirus"/>
</dbReference>
<dbReference type="InterPro" id="IPR043629">
    <property type="entry name" value="Salyut_dom"/>
</dbReference>
<dbReference type="InterPro" id="IPR043181">
    <property type="entry name" value="TYMV_endopept_dom"/>
</dbReference>
<dbReference type="Pfam" id="PF05381">
    <property type="entry name" value="Peptidase_C21"/>
    <property type="match status" value="1"/>
</dbReference>
<dbReference type="Pfam" id="PF00978">
    <property type="entry name" value="RdRP_2"/>
    <property type="match status" value="1"/>
</dbReference>
<dbReference type="Pfam" id="PF19227">
    <property type="entry name" value="Salyut"/>
    <property type="match status" value="1"/>
</dbReference>
<dbReference type="Pfam" id="PF01443">
    <property type="entry name" value="Viral_helicase1"/>
    <property type="match status" value="1"/>
</dbReference>
<dbReference type="Pfam" id="PF01660">
    <property type="entry name" value="Vmethyltransf"/>
    <property type="match status" value="1"/>
</dbReference>
<dbReference type="SUPFAM" id="SSF56672">
    <property type="entry name" value="DNA/RNA polymerases"/>
    <property type="match status" value="1"/>
</dbReference>
<dbReference type="PROSITE" id="PS51743">
    <property type="entry name" value="ALPHAVIRUS_MT"/>
    <property type="match status" value="1"/>
</dbReference>
<dbReference type="PROSITE" id="PS51738">
    <property type="entry name" value="PEPTIDASE_C21"/>
    <property type="match status" value="1"/>
</dbReference>
<dbReference type="PROSITE" id="PS51657">
    <property type="entry name" value="PSRV_HELICASE"/>
    <property type="match status" value="1"/>
</dbReference>
<dbReference type="PROSITE" id="PS50507">
    <property type="entry name" value="RDRP_SSRNA_POS"/>
    <property type="match status" value="1"/>
</dbReference>